<evidence type="ECO:0000250" key="1"/>
<evidence type="ECO:0000269" key="2">
    <source>
    </source>
</evidence>
<evidence type="ECO:0000305" key="3"/>
<accession>C6L7V8</accession>
<protein>
    <recommendedName>
        <fullName>Curcumin synthase 2</fullName>
        <ecNumber>2.3.1.217</ecNumber>
    </recommendedName>
</protein>
<comment type="function">
    <text evidence="2">Catalyzes the synthesis of curcumin by condensing feruloyl-CoA with a diketide-CoA in the curcuminoid biosynthesis.</text>
</comment>
<comment type="catalytic activity">
    <reaction evidence="2">
        <text>(E)-feruloylacetyl-CoA + (E)-feruloyl-CoA + H2O = curcumin + CO2 + 2 CoA</text>
        <dbReference type="Rhea" id="RHEA:34823"/>
        <dbReference type="ChEBI" id="CHEBI:3962"/>
        <dbReference type="ChEBI" id="CHEBI:15377"/>
        <dbReference type="ChEBI" id="CHEBI:16526"/>
        <dbReference type="ChEBI" id="CHEBI:57287"/>
        <dbReference type="ChEBI" id="CHEBI:87305"/>
        <dbReference type="ChEBI" id="CHEBI:142389"/>
        <dbReference type="EC" id="2.3.1.217"/>
    </reaction>
</comment>
<comment type="biophysicochemical properties">
    <kinetics>
        <KM evidence="2">4.3 uM for feruloyl-CoA</KM>
        <KM evidence="2">89 uM for p-coumaroyl-CoA</KM>
        <text>kcat is 0.41 min(-1) with feruloyl-CoA. kcat is 0.94 min(-1) with p-coumaroyl-CoA.</text>
    </kinetics>
    <phDependence>
        <text evidence="2">Optimum pH is 8.0.</text>
    </phDependence>
    <temperatureDependence>
        <text evidence="2">Optimum temperature is 45-55 degrees Celsius.</text>
    </temperatureDependence>
</comment>
<comment type="pathway">
    <text evidence="2">Secondary metabolite biosynthesis; flavonoid biosynthesis.</text>
</comment>
<comment type="subunit">
    <text evidence="1">Homodimer.</text>
</comment>
<comment type="similarity">
    <text evidence="3">Belongs to the thiolase-like superfamily. Chalcone/stilbene synthases family.</text>
</comment>
<feature type="chain" id="PRO_0000422572" description="Curcumin synthase 2">
    <location>
        <begin position="1"/>
        <end position="391"/>
    </location>
</feature>
<feature type="active site" evidence="1">
    <location>
        <position position="166"/>
    </location>
</feature>
<gene>
    <name type="primary">CURS2</name>
</gene>
<name>CURS2_CURLO</name>
<sequence>MAMISLQAMRKAQRAQGPATILAVGTANPPNLYEQDTYPDYYFRVTNSEHKQELKNKFRLMCEKTMVKRRYLYLTPEILKERPKLCSYMEPSFDDRQDIVVEEVPKLAAEAAENAIKEWGGDKSAITHLVFCSISGIDMPGADYRLAQLLGLPLAVNRLMLYSQACHMGAAMLRIAKDIAENNRSARVLVVACEITVLSFRGPDERDFQALAGQAGFGDGAGAMIVGADPVLGVERPLYHIMSATQTTVPESEKAVGGHLREVGLTFHFFNQLPAIIADNVGNSLAEAFEPIGIKDWNNIFWVAHPGNWAIMDAIETKLGLEQSKLATARHVFSEFGNMQSATVYFVMDELRKRSAAENRATTGDGLRWGVLFGFGPGISIETVVLQSVPL</sequence>
<reference key="1">
    <citation type="journal article" date="2009" name="FEBS Lett.">
        <title>Identification and characterization of multiple curcumin synthases from the herb Curcuma longa.</title>
        <authorList>
            <person name="Katsuyama Y."/>
            <person name="Kita T."/>
            <person name="Horinouchi S."/>
        </authorList>
    </citation>
    <scope>NUCLEOTIDE SEQUENCE [MRNA]</scope>
    <scope>FUNCTION</scope>
    <scope>CATALYTIC ACTIVITY</scope>
    <scope>PATHWAY</scope>
    <scope>BIOPHYSICOCHEMICAL PROPERTIES</scope>
</reference>
<dbReference type="EC" id="2.3.1.217"/>
<dbReference type="EMBL" id="AB506762">
    <property type="protein sequence ID" value="BAH85780.1"/>
    <property type="molecule type" value="mRNA"/>
</dbReference>
<dbReference type="SMR" id="C6L7V8"/>
<dbReference type="KEGG" id="ag:BAH85780"/>
<dbReference type="BioCyc" id="MetaCyc:MONOMER-15410"/>
<dbReference type="BRENDA" id="2.3.1.217">
    <property type="organism ID" value="9125"/>
</dbReference>
<dbReference type="BRENDA" id="2.3.1.219">
    <property type="organism ID" value="9125"/>
</dbReference>
<dbReference type="UniPathway" id="UPA00154"/>
<dbReference type="GO" id="GO:0016747">
    <property type="term" value="F:acyltransferase activity, transferring groups other than amino-acyl groups"/>
    <property type="evidence" value="ECO:0000314"/>
    <property type="project" value="UniProtKB"/>
</dbReference>
<dbReference type="GO" id="GO:0102106">
    <property type="term" value="F:curcumin synthase activity"/>
    <property type="evidence" value="ECO:0007669"/>
    <property type="project" value="UniProtKB-EC"/>
</dbReference>
<dbReference type="GO" id="GO:0009813">
    <property type="term" value="P:flavonoid biosynthetic process"/>
    <property type="evidence" value="ECO:0000314"/>
    <property type="project" value="UniProtKB"/>
</dbReference>
<dbReference type="GO" id="GO:0030639">
    <property type="term" value="P:polyketide biosynthetic process"/>
    <property type="evidence" value="ECO:0007669"/>
    <property type="project" value="TreeGrafter"/>
</dbReference>
<dbReference type="CDD" id="cd00831">
    <property type="entry name" value="CHS_like"/>
    <property type="match status" value="1"/>
</dbReference>
<dbReference type="FunFam" id="3.40.47.10:FF:000014">
    <property type="entry name" value="Chalcone synthase 1"/>
    <property type="match status" value="1"/>
</dbReference>
<dbReference type="FunFam" id="3.40.47.10:FF:000025">
    <property type="entry name" value="Chalcone synthase 2"/>
    <property type="match status" value="1"/>
</dbReference>
<dbReference type="Gene3D" id="3.40.47.10">
    <property type="match status" value="2"/>
</dbReference>
<dbReference type="InterPro" id="IPR012328">
    <property type="entry name" value="Chalcone/stilbene_synt_C"/>
</dbReference>
<dbReference type="InterPro" id="IPR001099">
    <property type="entry name" value="Chalcone/stilbene_synt_N"/>
</dbReference>
<dbReference type="InterPro" id="IPR011141">
    <property type="entry name" value="Polyketide_synthase_type-III"/>
</dbReference>
<dbReference type="InterPro" id="IPR016039">
    <property type="entry name" value="Thiolase-like"/>
</dbReference>
<dbReference type="PANTHER" id="PTHR11877:SF105">
    <property type="entry name" value="CHALCONE SYNTHASE"/>
    <property type="match status" value="1"/>
</dbReference>
<dbReference type="PANTHER" id="PTHR11877">
    <property type="entry name" value="HYDROXYMETHYLGLUTARYL-COA SYNTHASE"/>
    <property type="match status" value="1"/>
</dbReference>
<dbReference type="Pfam" id="PF02797">
    <property type="entry name" value="Chal_sti_synt_C"/>
    <property type="match status" value="1"/>
</dbReference>
<dbReference type="Pfam" id="PF00195">
    <property type="entry name" value="Chal_sti_synt_N"/>
    <property type="match status" value="1"/>
</dbReference>
<dbReference type="PIRSF" id="PIRSF000451">
    <property type="entry name" value="PKS_III"/>
    <property type="match status" value="1"/>
</dbReference>
<dbReference type="SUPFAM" id="SSF53901">
    <property type="entry name" value="Thiolase-like"/>
    <property type="match status" value="2"/>
</dbReference>
<proteinExistence type="evidence at protein level"/>
<organism>
    <name type="scientific">Curcuma longa</name>
    <name type="common">Turmeric</name>
    <name type="synonym">Curcuma domestica</name>
    <dbReference type="NCBI Taxonomy" id="136217"/>
    <lineage>
        <taxon>Eukaryota</taxon>
        <taxon>Viridiplantae</taxon>
        <taxon>Streptophyta</taxon>
        <taxon>Embryophyta</taxon>
        <taxon>Tracheophyta</taxon>
        <taxon>Spermatophyta</taxon>
        <taxon>Magnoliopsida</taxon>
        <taxon>Liliopsida</taxon>
        <taxon>Zingiberales</taxon>
        <taxon>Zingiberaceae</taxon>
        <taxon>Curcuma</taxon>
    </lineage>
</organism>
<keyword id="KW-0012">Acyltransferase</keyword>
<keyword id="KW-0284">Flavonoid biosynthesis</keyword>
<keyword id="KW-0808">Transferase</keyword>